<dbReference type="EC" id="1.10.3.9" evidence="2"/>
<dbReference type="EMBL" id="BA000039">
    <property type="protein sequence ID" value="BAC09029.1"/>
    <property type="molecule type" value="Genomic_DNA"/>
</dbReference>
<dbReference type="RefSeq" id="NP_682267.1">
    <property type="nucleotide sequence ID" value="NC_004113.1"/>
</dbReference>
<dbReference type="RefSeq" id="WP_011057317.1">
    <property type="nucleotide sequence ID" value="NC_004113.1"/>
</dbReference>
<dbReference type="PDB" id="7YQ7">
    <property type="method" value="X-ray"/>
    <property type="resolution" value="1.90 A"/>
    <property type="chains" value="A/a=1-360"/>
</dbReference>
<dbReference type="PDBsum" id="7YQ7"/>
<dbReference type="SMR" id="Q8DIV4"/>
<dbReference type="STRING" id="197221.gene:10748077"/>
<dbReference type="EnsemblBacteria" id="BAC09029">
    <property type="protein sequence ID" value="BAC09029"/>
    <property type="gene ID" value="BAC09029"/>
</dbReference>
<dbReference type="KEGG" id="tel:tlr1477"/>
<dbReference type="PATRIC" id="fig|197221.4.peg.1549"/>
<dbReference type="eggNOG" id="ENOG502Z87P">
    <property type="taxonomic scope" value="Bacteria"/>
</dbReference>
<dbReference type="Proteomes" id="UP000000440">
    <property type="component" value="Chromosome"/>
</dbReference>
<dbReference type="GO" id="GO:0009523">
    <property type="term" value="C:photosystem II"/>
    <property type="evidence" value="ECO:0007669"/>
    <property type="project" value="UniProtKB-KW"/>
</dbReference>
<dbReference type="GO" id="GO:0031676">
    <property type="term" value="C:plasma membrane-derived thylakoid membrane"/>
    <property type="evidence" value="ECO:0007669"/>
    <property type="project" value="UniProtKB-SubCell"/>
</dbReference>
<dbReference type="GO" id="GO:0016168">
    <property type="term" value="F:chlorophyll binding"/>
    <property type="evidence" value="ECO:0007669"/>
    <property type="project" value="UniProtKB-UniRule"/>
</dbReference>
<dbReference type="GO" id="GO:0045156">
    <property type="term" value="F:electron transporter, transferring electrons within the cyclic electron transport pathway of photosynthesis activity"/>
    <property type="evidence" value="ECO:0007669"/>
    <property type="project" value="InterPro"/>
</dbReference>
<dbReference type="GO" id="GO:0005506">
    <property type="term" value="F:iron ion binding"/>
    <property type="evidence" value="ECO:0007669"/>
    <property type="project" value="UniProtKB-UniRule"/>
</dbReference>
<dbReference type="GO" id="GO:0016682">
    <property type="term" value="F:oxidoreductase activity, acting on diphenols and related substances as donors, oxygen as acceptor"/>
    <property type="evidence" value="ECO:0007669"/>
    <property type="project" value="UniProtKB-UniRule"/>
</dbReference>
<dbReference type="GO" id="GO:0010242">
    <property type="term" value="F:oxygen evolving activity"/>
    <property type="evidence" value="ECO:0007669"/>
    <property type="project" value="UniProtKB-EC"/>
</dbReference>
<dbReference type="GO" id="GO:0009772">
    <property type="term" value="P:photosynthetic electron transport in photosystem II"/>
    <property type="evidence" value="ECO:0007669"/>
    <property type="project" value="InterPro"/>
</dbReference>
<dbReference type="GO" id="GO:0009635">
    <property type="term" value="P:response to herbicide"/>
    <property type="evidence" value="ECO:0007669"/>
    <property type="project" value="UniProtKB-KW"/>
</dbReference>
<dbReference type="CDD" id="cd09289">
    <property type="entry name" value="Photosystem-II_D1"/>
    <property type="match status" value="1"/>
</dbReference>
<dbReference type="FunFam" id="1.20.85.10:FF:000002">
    <property type="entry name" value="Photosystem II protein D1"/>
    <property type="match status" value="1"/>
</dbReference>
<dbReference type="Gene3D" id="1.20.85.10">
    <property type="entry name" value="Photosystem II protein D1-like"/>
    <property type="match status" value="1"/>
</dbReference>
<dbReference type="HAMAP" id="MF_01379">
    <property type="entry name" value="PSII_PsbA_D1"/>
    <property type="match status" value="1"/>
</dbReference>
<dbReference type="InterPro" id="IPR055266">
    <property type="entry name" value="D1/D2"/>
</dbReference>
<dbReference type="InterPro" id="IPR036854">
    <property type="entry name" value="Photo_II_D1/D2_sf"/>
</dbReference>
<dbReference type="InterPro" id="IPR000484">
    <property type="entry name" value="Photo_RC_L/M"/>
</dbReference>
<dbReference type="InterPro" id="IPR055265">
    <property type="entry name" value="Photo_RC_L/M_CS"/>
</dbReference>
<dbReference type="InterPro" id="IPR005867">
    <property type="entry name" value="PSII_D1"/>
</dbReference>
<dbReference type="NCBIfam" id="TIGR01151">
    <property type="entry name" value="psbA"/>
    <property type="match status" value="1"/>
</dbReference>
<dbReference type="PANTHER" id="PTHR33149:SF12">
    <property type="entry name" value="PHOTOSYSTEM II D2 PROTEIN"/>
    <property type="match status" value="1"/>
</dbReference>
<dbReference type="PANTHER" id="PTHR33149">
    <property type="entry name" value="PHOTOSYSTEM II PROTEIN D1"/>
    <property type="match status" value="1"/>
</dbReference>
<dbReference type="Pfam" id="PF00124">
    <property type="entry name" value="Photo_RC"/>
    <property type="match status" value="1"/>
</dbReference>
<dbReference type="PRINTS" id="PR00256">
    <property type="entry name" value="REACTNCENTRE"/>
</dbReference>
<dbReference type="SUPFAM" id="SSF81483">
    <property type="entry name" value="Bacterial photosystem II reaction centre, L and M subunits"/>
    <property type="match status" value="1"/>
</dbReference>
<dbReference type="PROSITE" id="PS00244">
    <property type="entry name" value="REACTION_CENTER"/>
    <property type="match status" value="1"/>
</dbReference>
<sequence>MTTVLQRREQLNLWEQFCSWVTSTNNRLYVGWFGVLMIPTLLAATICFVIAFIAAPPVDIDGIREPVSGSLLYGNNIITGAVVPSSNAIGLHFYPIWEAASLDEWLYNGGPYQLIIFHFLIGVFCYMGREWELSYRLGMRPWICVAYSAPVAAATAVFLIYPIGQGSFSDGMPLGISGTFNFMLVFQAEHNILMHPFHQLGVAGVFGGALFSAMHGSLVTSSLIRETTETESANYGYKFGQEEETYNIVAAHGYFGRLIFQYASFNNSRALHFFLAAWPVIGIWFTALGISTMAFNLNGFNFNHSVVDAQGNVINTWADIINRANLGMEVMHERNAHNFPLDLASAESAPVAMIAPSING</sequence>
<protein>
    <recommendedName>
        <fullName evidence="2">Photosystem II protein D1 3</fullName>
        <shortName evidence="2">PSII D1 protein 3</shortName>
        <ecNumber evidence="2">1.10.3.9</ecNumber>
    </recommendedName>
    <alternativeName>
        <fullName evidence="2">Photosystem II Q(B) protein 3</fullName>
    </alternativeName>
</protein>
<evidence type="ECO:0000250" key="1">
    <source>
        <dbReference type="UniProtKB" id="P0A444"/>
    </source>
</evidence>
<evidence type="ECO:0000255" key="2">
    <source>
        <dbReference type="HAMAP-Rule" id="MF_01379"/>
    </source>
</evidence>
<evidence type="ECO:0000269" key="3">
    <source>
    </source>
</evidence>
<evidence type="ECO:0000269" key="4">
    <source>
    </source>
</evidence>
<evidence type="ECO:0000305" key="5"/>
<evidence type="ECO:0007829" key="6">
    <source>
        <dbReference type="PDB" id="7YQ7"/>
    </source>
</evidence>
<feature type="initiator methionine" description="Removed" evidence="4">
    <location>
        <position position="1"/>
    </location>
</feature>
<feature type="chain" id="PRO_0000316374" description="Photosystem II protein D1 3" evidence="2">
    <location>
        <begin position="2"/>
        <end position="344"/>
    </location>
</feature>
<feature type="propeptide" id="PRO_0000316375" evidence="2">
    <location>
        <begin position="345"/>
        <end position="360"/>
    </location>
</feature>
<feature type="transmembrane region" description="Helical" evidence="2">
    <location>
        <begin position="29"/>
        <end position="46"/>
    </location>
</feature>
<feature type="transmembrane region" description="Helical" evidence="2">
    <location>
        <begin position="118"/>
        <end position="133"/>
    </location>
</feature>
<feature type="transmembrane region" description="Helical" evidence="2">
    <location>
        <begin position="142"/>
        <end position="156"/>
    </location>
</feature>
<feature type="transmembrane region" description="Helical" evidence="2">
    <location>
        <begin position="197"/>
        <end position="218"/>
    </location>
</feature>
<feature type="transmembrane region" description="Helical" evidence="2">
    <location>
        <begin position="274"/>
        <end position="288"/>
    </location>
</feature>
<feature type="binding site" description="axial binding residue" evidence="2">
    <location>
        <position position="118"/>
    </location>
    <ligand>
        <name>chlorophyll a</name>
        <dbReference type="ChEBI" id="CHEBI:58416"/>
        <label>ChlzD1</label>
    </ligand>
    <ligandPart>
        <name>Mg</name>
        <dbReference type="ChEBI" id="CHEBI:25107"/>
    </ligandPart>
</feature>
<feature type="binding site" evidence="2">
    <location>
        <position position="126"/>
    </location>
    <ligand>
        <name>pheophytin a</name>
        <dbReference type="ChEBI" id="CHEBI:136840"/>
        <label>D1</label>
    </ligand>
</feature>
<feature type="binding site" evidence="2">
    <location>
        <position position="170"/>
    </location>
    <ligand>
        <name>[CaMn4O5] cluster</name>
        <dbReference type="ChEBI" id="CHEBI:189552"/>
    </ligand>
</feature>
<feature type="binding site" evidence="2">
    <location>
        <position position="189"/>
    </location>
    <ligand>
        <name>[CaMn4O5] cluster</name>
        <dbReference type="ChEBI" id="CHEBI:189552"/>
    </ligand>
</feature>
<feature type="binding site" description="axial binding residue" evidence="2">
    <location>
        <position position="198"/>
    </location>
    <ligand>
        <name>chlorophyll a</name>
        <dbReference type="ChEBI" id="CHEBI:58416"/>
        <label>PD1</label>
    </ligand>
    <ligandPart>
        <name>Mg</name>
        <dbReference type="ChEBI" id="CHEBI:25107"/>
    </ligandPart>
</feature>
<feature type="binding site" evidence="2">
    <location>
        <position position="215"/>
    </location>
    <ligand>
        <name>a quinone</name>
        <dbReference type="ChEBI" id="CHEBI:132124"/>
        <label>B</label>
    </ligand>
</feature>
<feature type="binding site" evidence="2">
    <location>
        <position position="215"/>
    </location>
    <ligand>
        <name>Fe cation</name>
        <dbReference type="ChEBI" id="CHEBI:24875"/>
        <note>ligand shared with heterodimeric partner</note>
    </ligand>
</feature>
<feature type="binding site" evidence="2">
    <location>
        <begin position="264"/>
        <end position="265"/>
    </location>
    <ligand>
        <name>a quinone</name>
        <dbReference type="ChEBI" id="CHEBI:132124"/>
        <label>B</label>
    </ligand>
</feature>
<feature type="binding site" evidence="2">
    <location>
        <position position="272"/>
    </location>
    <ligand>
        <name>Fe cation</name>
        <dbReference type="ChEBI" id="CHEBI:24875"/>
        <note>ligand shared with heterodimeric partner</note>
    </ligand>
</feature>
<feature type="binding site" evidence="2">
    <location>
        <position position="332"/>
    </location>
    <ligand>
        <name>[CaMn4O5] cluster</name>
        <dbReference type="ChEBI" id="CHEBI:189552"/>
    </ligand>
</feature>
<feature type="binding site" evidence="2">
    <location>
        <position position="333"/>
    </location>
    <ligand>
        <name>[CaMn4O5] cluster</name>
        <dbReference type="ChEBI" id="CHEBI:189552"/>
    </ligand>
</feature>
<feature type="binding site" evidence="2">
    <location>
        <position position="342"/>
    </location>
    <ligand>
        <name>[CaMn4O5] cluster</name>
        <dbReference type="ChEBI" id="CHEBI:189552"/>
    </ligand>
</feature>
<feature type="binding site" evidence="2">
    <location>
        <position position="344"/>
    </location>
    <ligand>
        <name>[CaMn4O5] cluster</name>
        <dbReference type="ChEBI" id="CHEBI:189552"/>
    </ligand>
</feature>
<feature type="site" description="Tyrosine radical intermediate" evidence="2">
    <location>
        <position position="161"/>
    </location>
</feature>
<feature type="site" description="Stabilizes free radical intermediate" evidence="2">
    <location>
        <position position="190"/>
    </location>
</feature>
<feature type="site" description="Cleavage; by CtpA" evidence="2">
    <location>
        <begin position="344"/>
        <end position="345"/>
    </location>
</feature>
<feature type="helix" evidence="6">
    <location>
        <begin position="6"/>
        <end position="10"/>
    </location>
</feature>
<feature type="helix" evidence="6">
    <location>
        <begin position="13"/>
        <end position="21"/>
    </location>
</feature>
<feature type="strand" evidence="6">
    <location>
        <begin position="26"/>
        <end position="28"/>
    </location>
</feature>
<feature type="helix" evidence="6">
    <location>
        <begin position="31"/>
        <end position="54"/>
    </location>
</feature>
<feature type="strand" evidence="6">
    <location>
        <begin position="62"/>
        <end position="64"/>
    </location>
</feature>
<feature type="helix" evidence="6">
    <location>
        <begin position="71"/>
        <end position="73"/>
    </location>
</feature>
<feature type="turn" evidence="6">
    <location>
        <begin position="77"/>
        <end position="79"/>
    </location>
</feature>
<feature type="turn" evidence="6">
    <location>
        <begin position="87"/>
        <end position="91"/>
    </location>
</feature>
<feature type="helix" evidence="6">
    <location>
        <begin position="96"/>
        <end position="98"/>
    </location>
</feature>
<feature type="strand" evidence="6">
    <location>
        <begin position="99"/>
        <end position="101"/>
    </location>
</feature>
<feature type="helix" evidence="6">
    <location>
        <begin position="102"/>
        <end position="107"/>
    </location>
</feature>
<feature type="helix" evidence="6">
    <location>
        <begin position="110"/>
        <end position="136"/>
    </location>
</feature>
<feature type="helix" evidence="6">
    <location>
        <begin position="143"/>
        <end position="158"/>
    </location>
</feature>
<feature type="helix" evidence="6">
    <location>
        <begin position="160"/>
        <end position="165"/>
    </location>
</feature>
<feature type="helix" evidence="6">
    <location>
        <begin position="168"/>
        <end position="170"/>
    </location>
</feature>
<feature type="helix" evidence="6">
    <location>
        <begin position="176"/>
        <end position="190"/>
    </location>
</feature>
<feature type="helix" evidence="6">
    <location>
        <begin position="192"/>
        <end position="194"/>
    </location>
</feature>
<feature type="helix" evidence="6">
    <location>
        <begin position="196"/>
        <end position="221"/>
    </location>
</feature>
<feature type="helix" evidence="6">
    <location>
        <begin position="233"/>
        <end position="236"/>
    </location>
</feature>
<feature type="helix" evidence="6">
    <location>
        <begin position="248"/>
        <end position="258"/>
    </location>
</feature>
<feature type="helix" evidence="6">
    <location>
        <begin position="261"/>
        <end position="263"/>
    </location>
</feature>
<feature type="helix" evidence="6">
    <location>
        <begin position="268"/>
        <end position="293"/>
    </location>
</feature>
<feature type="turn" evidence="6">
    <location>
        <begin position="294"/>
        <end position="296"/>
    </location>
</feature>
<feature type="strand" evidence="6">
    <location>
        <begin position="297"/>
        <end position="299"/>
    </location>
</feature>
<feature type="strand" evidence="6">
    <location>
        <begin position="309"/>
        <end position="311"/>
    </location>
</feature>
<feature type="helix" evidence="6">
    <location>
        <begin position="317"/>
        <end position="331"/>
    </location>
</feature>
<feature type="turn" evidence="6">
    <location>
        <begin position="332"/>
        <end position="336"/>
    </location>
</feature>
<organism>
    <name type="scientific">Thermosynechococcus vestitus (strain NIES-2133 / IAM M-273 / BP-1)</name>
    <dbReference type="NCBI Taxonomy" id="197221"/>
    <lineage>
        <taxon>Bacteria</taxon>
        <taxon>Bacillati</taxon>
        <taxon>Cyanobacteriota</taxon>
        <taxon>Cyanophyceae</taxon>
        <taxon>Acaryochloridales</taxon>
        <taxon>Thermosynechococcaceae</taxon>
        <taxon>Thermosynechococcus</taxon>
    </lineage>
</organism>
<comment type="function">
    <text evidence="2 4">Photosystem II (PSII) is a light-driven water:plastoquinone oxidoreductase that uses light energy to abstract electrons from H(2)O, generating O(2) and a proton gradient subsequently used for ATP formation. It consists of a core antenna complex that captures photons, and an electron transfer chain that converts photonic excitation into a charge separation. The D1/D2 (PsbA/PsbD) reaction center heterodimer binds P680, the primary electron donor of PSII as well as several subsequent electron acceptors.</text>
</comment>
<comment type="catalytic activity">
    <reaction evidence="2">
        <text>2 a plastoquinone + 4 hnu + 2 H2O = 2 a plastoquinol + O2</text>
        <dbReference type="Rhea" id="RHEA:36359"/>
        <dbReference type="Rhea" id="RHEA-COMP:9561"/>
        <dbReference type="Rhea" id="RHEA-COMP:9562"/>
        <dbReference type="ChEBI" id="CHEBI:15377"/>
        <dbReference type="ChEBI" id="CHEBI:15379"/>
        <dbReference type="ChEBI" id="CHEBI:17757"/>
        <dbReference type="ChEBI" id="CHEBI:30212"/>
        <dbReference type="ChEBI" id="CHEBI:62192"/>
        <dbReference type="EC" id="1.10.3.9"/>
    </reaction>
</comment>
<comment type="cofactor">
    <text evidence="2 4">The D1/D2 heterodimer binds P680, chlorophylls that are the primary electron donor of PSII, and subsequent electron acceptors. It shares a non-heme iron and each subunit binds pheophytin, quinone, additional chlorophylls, carotenoids and lipids. D1 provides most of the ligands for the Mn4-Ca-O5 cluster of the oxygen-evolving complex (OEC). There is also a Cl(-1) ion associated with D1 and D2, which is required for oxygen evolution. The PSII complex binds additional chlorophylls, carotenoids and specific lipids.</text>
</comment>
<comment type="subunit">
    <text evidence="1 2 4">PSII is composed of 1 copy each of membrane proteins PsbA, PsbB, PsbC, PsbD, PsbE, PsbF, PsbH, PsbI, PsbJ, PsbK, PsbL, PsbM, PsbT, PsbX, PsbY, PsbZ, Psb30/Ycf12, peripheral proteins PsbO, CyanoQ (PsbQ), PsbU, PsbV and a large number of cofactors. It forms dimeric complexes (By similarity) (PubMed:19219048). Precursor protein interacts with Ycf48 (By similarity).</text>
</comment>
<comment type="subcellular location">
    <subcellularLocation>
        <location evidence="2 4">Cellular thylakoid membrane</location>
        <topology evidence="2 4">Multi-pass membrane protein</topology>
    </subcellularLocation>
</comment>
<comment type="PTM">
    <text evidence="2">C-terminally processed by CtpA; processing is essential to allow assembly of the oxygen-evolving complex and thus photosynthetic growth.</text>
</comment>
<comment type="PTM">
    <text evidence="2">Tyr-161 forms a radical intermediate that is referred to as redox-active TyrZ, YZ or Y-Z.</text>
</comment>
<comment type="mass spectrometry">
    <text>Mass for C-terminally truncated D1. The measured protein is probably a mixture of the product of the 3 psbA genes.</text>
</comment>
<comment type="miscellaneous">
    <text evidence="2 3">Cyanobacteria usually contain more than 2 copies of the psbA gene.</text>
</comment>
<comment type="miscellaneous">
    <text evidence="2">2 of the reaction center chlorophylls (ChlD1 and ChlD2) are entirely coordinated by water.</text>
</comment>
<comment type="miscellaneous">
    <text evidence="2">Herbicides such as atrazine, BNT, diuron or ioxynil bind in the Q(B) binding site and block subsequent electron transfer.</text>
</comment>
<comment type="similarity">
    <text evidence="2">Belongs to the reaction center PufL/M/PsbA/D family.</text>
</comment>
<proteinExistence type="evidence at protein level"/>
<name>PSBA3_THEVB</name>
<gene>
    <name evidence="2 5" type="primary">psbA3</name>
    <name type="ordered locus">tlr1477</name>
</gene>
<keyword id="KW-0002">3D-structure</keyword>
<keyword id="KW-0106">Calcium</keyword>
<keyword id="KW-0148">Chlorophyll</keyword>
<keyword id="KW-0157">Chromophore</keyword>
<keyword id="KW-0249">Electron transport</keyword>
<keyword id="KW-0359">Herbicide resistance</keyword>
<keyword id="KW-0408">Iron</keyword>
<keyword id="KW-0460">Magnesium</keyword>
<keyword id="KW-0464">Manganese</keyword>
<keyword id="KW-0472">Membrane</keyword>
<keyword id="KW-0479">Metal-binding</keyword>
<keyword id="KW-0560">Oxidoreductase</keyword>
<keyword id="KW-0602">Photosynthesis</keyword>
<keyword id="KW-0604">Photosystem II</keyword>
<keyword id="KW-1185">Reference proteome</keyword>
<keyword id="KW-0793">Thylakoid</keyword>
<keyword id="KW-0812">Transmembrane</keyword>
<keyword id="KW-1133">Transmembrane helix</keyword>
<keyword id="KW-0813">Transport</keyword>
<reference key="1">
    <citation type="journal article" date="2002" name="DNA Res.">
        <title>Complete genome structure of the thermophilic cyanobacterium Thermosynechococcus elongatus BP-1.</title>
        <authorList>
            <person name="Nakamura Y."/>
            <person name="Kaneko T."/>
            <person name="Sato S."/>
            <person name="Ikeuchi M."/>
            <person name="Katoh H."/>
            <person name="Sasamoto S."/>
            <person name="Watanabe A."/>
            <person name="Iriguchi M."/>
            <person name="Kawashima K."/>
            <person name="Kimura T."/>
            <person name="Kishida Y."/>
            <person name="Kiyokawa C."/>
            <person name="Kohara M."/>
            <person name="Matsumoto M."/>
            <person name="Matsuno A."/>
            <person name="Nakazaki N."/>
            <person name="Shimpo S."/>
            <person name="Sugimoto M."/>
            <person name="Takeuchi C."/>
            <person name="Yamada M."/>
            <person name="Tabata S."/>
        </authorList>
    </citation>
    <scope>NUCLEOTIDE SEQUENCE [LARGE SCALE GENOMIC DNA]</scope>
    <source>
        <strain>NIES-2133 / IAM M-273 / BP-1</strain>
    </source>
</reference>
<reference key="2">
    <citation type="journal article" date="2009" name="Nat. Struct. Mol. Biol.">
        <title>Cyanobacterial photosystem II at 2.9-A resolution and the role of quinones, lipids, channels and chloride.</title>
        <authorList>
            <person name="Guskov A."/>
            <person name="Kern J."/>
            <person name="Gabdulkhakov A."/>
            <person name="Broser M."/>
            <person name="Zouni A."/>
            <person name="Saenger W."/>
        </authorList>
    </citation>
    <scope>FUNCTION</scope>
    <scope>COFACTOR</scope>
    <scope>SUBUNIT</scope>
    <scope>SUBCELLULAR LOCATION</scope>
    <scope>MASS SPECTROMETRY</scope>
    <scope>TOPOLOGY</scope>
    <source>
        <strain>NIES-2133 / IAM M-273 / BP-1</strain>
    </source>
</reference>
<accession>Q8DIV4</accession>